<sequence>MAERKQGGQNNGAGSSVITEVKPKTQKPSLYRVLILNDDYTPMEFVVYVLERFFNKSREDATRIMLHVHQHGVGVCGVFTYEVAETKVAQVIDSARRHQHPLQCTMEKD</sequence>
<organism>
    <name type="scientific">Caulobacter sp. (strain K31)</name>
    <dbReference type="NCBI Taxonomy" id="366602"/>
    <lineage>
        <taxon>Bacteria</taxon>
        <taxon>Pseudomonadati</taxon>
        <taxon>Pseudomonadota</taxon>
        <taxon>Alphaproteobacteria</taxon>
        <taxon>Caulobacterales</taxon>
        <taxon>Caulobacteraceae</taxon>
        <taxon>Caulobacter</taxon>
    </lineage>
</organism>
<name>CLPS_CAUSK</name>
<reference key="1">
    <citation type="submission" date="2008-01" db="EMBL/GenBank/DDBJ databases">
        <title>Complete sequence of chromosome of Caulobacter sp. K31.</title>
        <authorList>
            <consortium name="US DOE Joint Genome Institute"/>
            <person name="Copeland A."/>
            <person name="Lucas S."/>
            <person name="Lapidus A."/>
            <person name="Barry K."/>
            <person name="Glavina del Rio T."/>
            <person name="Dalin E."/>
            <person name="Tice H."/>
            <person name="Pitluck S."/>
            <person name="Bruce D."/>
            <person name="Goodwin L."/>
            <person name="Thompson L.S."/>
            <person name="Brettin T."/>
            <person name="Detter J.C."/>
            <person name="Han C."/>
            <person name="Schmutz J."/>
            <person name="Larimer F."/>
            <person name="Land M."/>
            <person name="Hauser L."/>
            <person name="Kyrpides N."/>
            <person name="Kim E."/>
            <person name="Stephens C."/>
            <person name="Richardson P."/>
        </authorList>
    </citation>
    <scope>NUCLEOTIDE SEQUENCE [LARGE SCALE GENOMIC DNA]</scope>
    <source>
        <strain>K31</strain>
    </source>
</reference>
<evidence type="ECO:0000255" key="1">
    <source>
        <dbReference type="HAMAP-Rule" id="MF_00302"/>
    </source>
</evidence>
<evidence type="ECO:0000256" key="2">
    <source>
        <dbReference type="SAM" id="MobiDB-lite"/>
    </source>
</evidence>
<accession>B0T2L1</accession>
<comment type="function">
    <text evidence="1">Involved in the modulation of the specificity of the ClpAP-mediated ATP-dependent protein degradation.</text>
</comment>
<comment type="subunit">
    <text evidence="1">Binds to the N-terminal domain of the chaperone ClpA.</text>
</comment>
<comment type="similarity">
    <text evidence="1">Belongs to the ClpS family.</text>
</comment>
<dbReference type="EMBL" id="CP000927">
    <property type="protein sequence ID" value="ABZ72262.1"/>
    <property type="molecule type" value="Genomic_DNA"/>
</dbReference>
<dbReference type="SMR" id="B0T2L1"/>
<dbReference type="STRING" id="366602.Caul_3135"/>
<dbReference type="KEGG" id="cak:Caul_3135"/>
<dbReference type="eggNOG" id="COG2127">
    <property type="taxonomic scope" value="Bacteria"/>
</dbReference>
<dbReference type="HOGENOM" id="CLU_134358_0_0_5"/>
<dbReference type="OrthoDB" id="9796121at2"/>
<dbReference type="GO" id="GO:0030163">
    <property type="term" value="P:protein catabolic process"/>
    <property type="evidence" value="ECO:0007669"/>
    <property type="project" value="InterPro"/>
</dbReference>
<dbReference type="GO" id="GO:0006508">
    <property type="term" value="P:proteolysis"/>
    <property type="evidence" value="ECO:0007669"/>
    <property type="project" value="UniProtKB-UniRule"/>
</dbReference>
<dbReference type="FunFam" id="3.30.1390.10:FF:000002">
    <property type="entry name" value="ATP-dependent Clp protease adapter protein ClpS"/>
    <property type="match status" value="1"/>
</dbReference>
<dbReference type="Gene3D" id="3.30.1390.10">
    <property type="match status" value="1"/>
</dbReference>
<dbReference type="HAMAP" id="MF_00302">
    <property type="entry name" value="ClpS"/>
    <property type="match status" value="1"/>
</dbReference>
<dbReference type="InterPro" id="IPR022935">
    <property type="entry name" value="ClpS"/>
</dbReference>
<dbReference type="InterPro" id="IPR003769">
    <property type="entry name" value="ClpS_core"/>
</dbReference>
<dbReference type="InterPro" id="IPR014719">
    <property type="entry name" value="Ribosomal_bL12_C/ClpS-like"/>
</dbReference>
<dbReference type="NCBIfam" id="NF000669">
    <property type="entry name" value="PRK00033.1-2"/>
    <property type="match status" value="1"/>
</dbReference>
<dbReference type="NCBIfam" id="NF000672">
    <property type="entry name" value="PRK00033.1-5"/>
    <property type="match status" value="1"/>
</dbReference>
<dbReference type="PANTHER" id="PTHR33473:SF19">
    <property type="entry name" value="ATP-DEPENDENT CLP PROTEASE ADAPTER PROTEIN CLPS"/>
    <property type="match status" value="1"/>
</dbReference>
<dbReference type="PANTHER" id="PTHR33473">
    <property type="entry name" value="ATP-DEPENDENT CLP PROTEASE ADAPTER PROTEIN CLPS1, CHLOROPLASTIC"/>
    <property type="match status" value="1"/>
</dbReference>
<dbReference type="Pfam" id="PF02617">
    <property type="entry name" value="ClpS"/>
    <property type="match status" value="1"/>
</dbReference>
<dbReference type="SUPFAM" id="SSF54736">
    <property type="entry name" value="ClpS-like"/>
    <property type="match status" value="1"/>
</dbReference>
<proteinExistence type="inferred from homology"/>
<protein>
    <recommendedName>
        <fullName evidence="1">ATP-dependent Clp protease adapter protein ClpS</fullName>
    </recommendedName>
</protein>
<feature type="chain" id="PRO_1000132805" description="ATP-dependent Clp protease adapter protein ClpS">
    <location>
        <begin position="1"/>
        <end position="109"/>
    </location>
</feature>
<feature type="region of interest" description="Disordered" evidence="2">
    <location>
        <begin position="1"/>
        <end position="21"/>
    </location>
</feature>
<gene>
    <name evidence="1" type="primary">clpS</name>
    <name type="ordered locus">Caul_3135</name>
</gene>